<protein>
    <recommendedName>
        <fullName evidence="1">Release factor glutamine methyltransferase</fullName>
        <shortName evidence="1">RF MTase</shortName>
        <ecNumber evidence="1">2.1.1.297</ecNumber>
    </recommendedName>
    <alternativeName>
        <fullName>M.MtuHHemKP</fullName>
    </alternativeName>
    <alternativeName>
        <fullName evidence="1">N5-glutamine methyltransferase PrmC</fullName>
    </alternativeName>
    <alternativeName>
        <fullName evidence="1">Protein-(glutamine-N5) MTase PrmC</fullName>
    </alternativeName>
    <alternativeName>
        <fullName evidence="1">Protein-glutamine N-methyltransferase PrmC</fullName>
    </alternativeName>
</protein>
<gene>
    <name evidence="1" type="primary">prmC</name>
    <name type="synonym">hemK</name>
    <name type="ordered locus">MT1339</name>
</gene>
<sequence length="304" mass="32406">MTLRQAIDLAAALLAEAGVDSARCDAEQLAAHLAGTDRGRLPLFEPPGDEFFGRYRDIVTARARRVPLQHLIGTVSFGPVVLHVGPGVFVPRPETEAILAWATAQSLPARPLIVDACTGSGALAVALAQHRANLGLKARIIGIDDSDCALDYARRNAAGTPVELVRADVTTPCLLPELDGQVDLMVSNPPYIPDAAVLEPEVAQHDPHHALFGGPDGMTVISAVVGLAGRWLRPGGLFAVEHDDTTSSSTVDLVSSTKLFVDVQARKDLAGRPRFVTAMRWGHLPLAGENGAIDPRQRRCRAKR</sequence>
<evidence type="ECO:0000255" key="1">
    <source>
        <dbReference type="HAMAP-Rule" id="MF_02126"/>
    </source>
</evidence>
<comment type="function">
    <text evidence="1">Methylates the class 1 translation termination release factors RF1/PrfA and RF2/PrfB on the glutamine residue of the universally conserved GGQ motif.</text>
</comment>
<comment type="catalytic activity">
    <reaction evidence="1">
        <text>L-glutaminyl-[peptide chain release factor] + S-adenosyl-L-methionine = N(5)-methyl-L-glutaminyl-[peptide chain release factor] + S-adenosyl-L-homocysteine + H(+)</text>
        <dbReference type="Rhea" id="RHEA:42896"/>
        <dbReference type="Rhea" id="RHEA-COMP:10271"/>
        <dbReference type="Rhea" id="RHEA-COMP:10272"/>
        <dbReference type="ChEBI" id="CHEBI:15378"/>
        <dbReference type="ChEBI" id="CHEBI:30011"/>
        <dbReference type="ChEBI" id="CHEBI:57856"/>
        <dbReference type="ChEBI" id="CHEBI:59789"/>
        <dbReference type="ChEBI" id="CHEBI:61891"/>
        <dbReference type="EC" id="2.1.1.297"/>
    </reaction>
</comment>
<comment type="similarity">
    <text evidence="1">Belongs to the protein N5-glutamine methyltransferase family. PrmC subfamily.</text>
</comment>
<feature type="chain" id="PRO_0000428117" description="Release factor glutamine methyltransferase">
    <location>
        <begin position="1"/>
        <end position="304"/>
    </location>
</feature>
<feature type="binding site" evidence="1">
    <location>
        <position position="144"/>
    </location>
    <ligand>
        <name>S-adenosyl-L-methionine</name>
        <dbReference type="ChEBI" id="CHEBI:59789"/>
    </ligand>
</feature>
<feature type="binding site" evidence="1">
    <location>
        <begin position="188"/>
        <end position="191"/>
    </location>
    <ligand>
        <name>substrate</name>
    </ligand>
</feature>
<feature type="binding site" evidence="1">
    <location>
        <position position="188"/>
    </location>
    <ligand>
        <name>S-adenosyl-L-methionine</name>
        <dbReference type="ChEBI" id="CHEBI:59789"/>
    </ligand>
</feature>
<organism>
    <name type="scientific">Mycobacterium tuberculosis (strain CDC 1551 / Oshkosh)</name>
    <dbReference type="NCBI Taxonomy" id="83331"/>
    <lineage>
        <taxon>Bacteria</taxon>
        <taxon>Bacillati</taxon>
        <taxon>Actinomycetota</taxon>
        <taxon>Actinomycetes</taxon>
        <taxon>Mycobacteriales</taxon>
        <taxon>Mycobacteriaceae</taxon>
        <taxon>Mycobacterium</taxon>
        <taxon>Mycobacterium tuberculosis complex</taxon>
    </lineage>
</organism>
<reference key="1">
    <citation type="journal article" date="2002" name="J. Bacteriol.">
        <title>Whole-genome comparison of Mycobacterium tuberculosis clinical and laboratory strains.</title>
        <authorList>
            <person name="Fleischmann R.D."/>
            <person name="Alland D."/>
            <person name="Eisen J.A."/>
            <person name="Carpenter L."/>
            <person name="White O."/>
            <person name="Peterson J.D."/>
            <person name="DeBoy R.T."/>
            <person name="Dodson R.J."/>
            <person name="Gwinn M.L."/>
            <person name="Haft D.H."/>
            <person name="Hickey E.K."/>
            <person name="Kolonay J.F."/>
            <person name="Nelson W.C."/>
            <person name="Umayam L.A."/>
            <person name="Ermolaeva M.D."/>
            <person name="Salzberg S.L."/>
            <person name="Delcher A."/>
            <person name="Utterback T.R."/>
            <person name="Weidman J.F."/>
            <person name="Khouri H.M."/>
            <person name="Gill J."/>
            <person name="Mikula A."/>
            <person name="Bishai W."/>
            <person name="Jacobs W.R. Jr."/>
            <person name="Venter J.C."/>
            <person name="Fraser C.M."/>
        </authorList>
    </citation>
    <scope>NUCLEOTIDE SEQUENCE [LARGE SCALE GENOMIC DNA]</scope>
    <source>
        <strain>CDC 1551 / Oshkosh</strain>
    </source>
</reference>
<accession>P9WHV2</accession>
<accession>L0T6G3</accession>
<accession>Q10602</accession>
<proteinExistence type="inferred from homology"/>
<name>PRMC_MYCTO</name>
<dbReference type="EC" id="2.1.1.297" evidence="1"/>
<dbReference type="EMBL" id="AE000516">
    <property type="protein sequence ID" value="AAK45601.1"/>
    <property type="molecule type" value="Genomic_DNA"/>
</dbReference>
<dbReference type="PIR" id="H70773">
    <property type="entry name" value="H70773"/>
</dbReference>
<dbReference type="RefSeq" id="WP_003917449.1">
    <property type="nucleotide sequence ID" value="NZ_KK341227.1"/>
</dbReference>
<dbReference type="SMR" id="P9WHV2"/>
<dbReference type="GeneID" id="45425274"/>
<dbReference type="KEGG" id="mtc:MT1339"/>
<dbReference type="HOGENOM" id="CLU_018398_4_0_11"/>
<dbReference type="Proteomes" id="UP000001020">
    <property type="component" value="Chromosome"/>
</dbReference>
<dbReference type="GO" id="GO:0003676">
    <property type="term" value="F:nucleic acid binding"/>
    <property type="evidence" value="ECO:0007669"/>
    <property type="project" value="InterPro"/>
</dbReference>
<dbReference type="GO" id="GO:0102559">
    <property type="term" value="F:protein-(glutamine-N5) methyltransferase activity"/>
    <property type="evidence" value="ECO:0007669"/>
    <property type="project" value="UniProtKB-EC"/>
</dbReference>
<dbReference type="GO" id="GO:0036009">
    <property type="term" value="F:protein-glutamine N-methyltransferase activity"/>
    <property type="evidence" value="ECO:0007669"/>
    <property type="project" value="UniProtKB-UniRule"/>
</dbReference>
<dbReference type="GO" id="GO:0032259">
    <property type="term" value="P:methylation"/>
    <property type="evidence" value="ECO:0007669"/>
    <property type="project" value="UniProtKB-KW"/>
</dbReference>
<dbReference type="CDD" id="cd02440">
    <property type="entry name" value="AdoMet_MTases"/>
    <property type="match status" value="1"/>
</dbReference>
<dbReference type="Gene3D" id="1.10.8.10">
    <property type="entry name" value="DNA helicase RuvA subunit, C-terminal domain"/>
    <property type="match status" value="1"/>
</dbReference>
<dbReference type="Gene3D" id="3.40.50.150">
    <property type="entry name" value="Vaccinia Virus protein VP39"/>
    <property type="match status" value="1"/>
</dbReference>
<dbReference type="HAMAP" id="MF_02126">
    <property type="entry name" value="RF_methyltr_PrmC"/>
    <property type="match status" value="1"/>
</dbReference>
<dbReference type="InterPro" id="IPR002052">
    <property type="entry name" value="DNA_methylase_N6_adenine_CS"/>
</dbReference>
<dbReference type="InterPro" id="IPR004556">
    <property type="entry name" value="HemK-like"/>
</dbReference>
<dbReference type="InterPro" id="IPR041698">
    <property type="entry name" value="Methyltransf_25"/>
</dbReference>
<dbReference type="InterPro" id="IPR050320">
    <property type="entry name" value="N5-glutamine_MTase"/>
</dbReference>
<dbReference type="InterPro" id="IPR040758">
    <property type="entry name" value="PrmC_N"/>
</dbReference>
<dbReference type="InterPro" id="IPR019874">
    <property type="entry name" value="RF_methyltr_PrmC"/>
</dbReference>
<dbReference type="InterPro" id="IPR029063">
    <property type="entry name" value="SAM-dependent_MTases_sf"/>
</dbReference>
<dbReference type="NCBIfam" id="TIGR00536">
    <property type="entry name" value="hemK_fam"/>
    <property type="match status" value="1"/>
</dbReference>
<dbReference type="NCBIfam" id="TIGR03534">
    <property type="entry name" value="RF_mod_PrmC"/>
    <property type="match status" value="1"/>
</dbReference>
<dbReference type="PANTHER" id="PTHR18895">
    <property type="entry name" value="HEMK METHYLTRANSFERASE"/>
    <property type="match status" value="1"/>
</dbReference>
<dbReference type="PANTHER" id="PTHR18895:SF74">
    <property type="entry name" value="MTRF1L RELEASE FACTOR GLUTAMINE METHYLTRANSFERASE"/>
    <property type="match status" value="1"/>
</dbReference>
<dbReference type="Pfam" id="PF13649">
    <property type="entry name" value="Methyltransf_25"/>
    <property type="match status" value="1"/>
</dbReference>
<dbReference type="Pfam" id="PF17827">
    <property type="entry name" value="PrmC_N"/>
    <property type="match status" value="1"/>
</dbReference>
<dbReference type="SUPFAM" id="SSF53335">
    <property type="entry name" value="S-adenosyl-L-methionine-dependent methyltransferases"/>
    <property type="match status" value="1"/>
</dbReference>
<keyword id="KW-0489">Methyltransferase</keyword>
<keyword id="KW-1185">Reference proteome</keyword>
<keyword id="KW-0949">S-adenosyl-L-methionine</keyword>
<keyword id="KW-0808">Transferase</keyword>